<organism>
    <name type="scientific">Protochlamydia amoebophila (strain UWE25)</name>
    <dbReference type="NCBI Taxonomy" id="264201"/>
    <lineage>
        <taxon>Bacteria</taxon>
        <taxon>Pseudomonadati</taxon>
        <taxon>Chlamydiota</taxon>
        <taxon>Chlamydiia</taxon>
        <taxon>Parachlamydiales</taxon>
        <taxon>Parachlamydiaceae</taxon>
        <taxon>Candidatus Protochlamydia</taxon>
    </lineage>
</organism>
<proteinExistence type="inferred from homology"/>
<accession>Q6MAY1</accession>
<comment type="similarity">
    <text evidence="2">Belongs to the class I-like SAM-binding methyltransferase superfamily. RNA M5U methyltransferase family.</text>
</comment>
<sequence length="442" mass="49972">MEVPFTIPGDQVNAILYKKTKDKYLSRLSKVTMPSNNRIDALCMHFGSCGGCCWQQLPYELQLKQKEKSIQNLFKPYLNENVKWHSIIPSSPWHYRNKMELTFSSDKAGRRYLGLIMQGTRGHVFQMKECLLANGWFAQAARAIQKWWDNSDVQAYHAIKDRGSLRTLTLREGLRTGDRLVMLTVSGNPDYALTKSQLQSFVQVLRDSIELSNSDQKLSVFLRIQQIAKGRPTNFYEMLLYGPDHIREKLYLPDFNEAIQTLNFRISPSAFFQPNTEQAEKLYSQALKLADLSASHVVYDLYCGTGTLGICSAKYVKEVIGIELSRESVLDARENVKENGLSNVTIKSGDVGQVLEALSQENSLKPDVVMVDPPRIGLDAKAIKHILDLKAPKLVYISCNPKTQVMNLGPLIDGGYQLQIVQPVDQFPQTVHVENITLLTLP</sequence>
<gene>
    <name type="ordered locus">pc1544</name>
</gene>
<reference key="1">
    <citation type="journal article" date="2004" name="Science">
        <title>Illuminating the evolutionary history of chlamydiae.</title>
        <authorList>
            <person name="Horn M."/>
            <person name="Collingro A."/>
            <person name="Schmitz-Esser S."/>
            <person name="Beier C.L."/>
            <person name="Purkhold U."/>
            <person name="Fartmann B."/>
            <person name="Brandt P."/>
            <person name="Nyakatura G.J."/>
            <person name="Droege M."/>
            <person name="Frishman D."/>
            <person name="Rattei T."/>
            <person name="Mewes H.-W."/>
            <person name="Wagner M."/>
        </authorList>
    </citation>
    <scope>NUCLEOTIDE SEQUENCE [LARGE SCALE GENOMIC DNA]</scope>
    <source>
        <strain>UWE25</strain>
    </source>
</reference>
<dbReference type="EC" id="2.1.1.-"/>
<dbReference type="EMBL" id="BX908798">
    <property type="protein sequence ID" value="CAF24268.1"/>
    <property type="molecule type" value="Genomic_DNA"/>
</dbReference>
<dbReference type="SMR" id="Q6MAY1"/>
<dbReference type="STRING" id="264201.pc1544"/>
<dbReference type="KEGG" id="pcu:PC_RS07395"/>
<dbReference type="eggNOG" id="COG2265">
    <property type="taxonomic scope" value="Bacteria"/>
</dbReference>
<dbReference type="HOGENOM" id="CLU_014689_7_2_0"/>
<dbReference type="OrthoDB" id="9804590at2"/>
<dbReference type="Proteomes" id="UP000000529">
    <property type="component" value="Chromosome"/>
</dbReference>
<dbReference type="GO" id="GO:0051539">
    <property type="term" value="F:4 iron, 4 sulfur cluster binding"/>
    <property type="evidence" value="ECO:0007669"/>
    <property type="project" value="UniProtKB-KW"/>
</dbReference>
<dbReference type="GO" id="GO:0046872">
    <property type="term" value="F:metal ion binding"/>
    <property type="evidence" value="ECO:0007669"/>
    <property type="project" value="UniProtKB-KW"/>
</dbReference>
<dbReference type="GO" id="GO:0070041">
    <property type="term" value="F:rRNA (uridine-C5-)-methyltransferase activity"/>
    <property type="evidence" value="ECO:0007669"/>
    <property type="project" value="TreeGrafter"/>
</dbReference>
<dbReference type="GO" id="GO:0070475">
    <property type="term" value="P:rRNA base methylation"/>
    <property type="evidence" value="ECO:0007669"/>
    <property type="project" value="TreeGrafter"/>
</dbReference>
<dbReference type="CDD" id="cd02440">
    <property type="entry name" value="AdoMet_MTases"/>
    <property type="match status" value="1"/>
</dbReference>
<dbReference type="Gene3D" id="2.40.50.1070">
    <property type="match status" value="1"/>
</dbReference>
<dbReference type="Gene3D" id="2.40.50.140">
    <property type="entry name" value="Nucleic acid-binding proteins"/>
    <property type="match status" value="1"/>
</dbReference>
<dbReference type="Gene3D" id="3.40.50.150">
    <property type="entry name" value="Vaccinia Virus protein VP39"/>
    <property type="match status" value="1"/>
</dbReference>
<dbReference type="InterPro" id="IPR030390">
    <property type="entry name" value="MeTrfase_TrmA_AS"/>
</dbReference>
<dbReference type="InterPro" id="IPR030391">
    <property type="entry name" value="MeTrfase_TrmA_CS"/>
</dbReference>
<dbReference type="InterPro" id="IPR012340">
    <property type="entry name" value="NA-bd_OB-fold"/>
</dbReference>
<dbReference type="InterPro" id="IPR029063">
    <property type="entry name" value="SAM-dependent_MTases_sf"/>
</dbReference>
<dbReference type="InterPro" id="IPR010280">
    <property type="entry name" value="U5_MeTrfase_fam"/>
</dbReference>
<dbReference type="NCBIfam" id="TIGR00479">
    <property type="entry name" value="rumA"/>
    <property type="match status" value="1"/>
</dbReference>
<dbReference type="PANTHER" id="PTHR11061">
    <property type="entry name" value="RNA M5U METHYLTRANSFERASE"/>
    <property type="match status" value="1"/>
</dbReference>
<dbReference type="PANTHER" id="PTHR11061:SF30">
    <property type="entry name" value="TRNA (URACIL(54)-C(5))-METHYLTRANSFERASE"/>
    <property type="match status" value="1"/>
</dbReference>
<dbReference type="Pfam" id="PF05958">
    <property type="entry name" value="tRNA_U5-meth_tr"/>
    <property type="match status" value="1"/>
</dbReference>
<dbReference type="SUPFAM" id="SSF53335">
    <property type="entry name" value="S-adenosyl-L-methionine-dependent methyltransferases"/>
    <property type="match status" value="1"/>
</dbReference>
<dbReference type="PROSITE" id="PS51687">
    <property type="entry name" value="SAM_MT_RNA_M5U"/>
    <property type="match status" value="1"/>
</dbReference>
<dbReference type="PROSITE" id="PS01230">
    <property type="entry name" value="TRMA_1"/>
    <property type="match status" value="1"/>
</dbReference>
<dbReference type="PROSITE" id="PS01231">
    <property type="entry name" value="TRMA_2"/>
    <property type="match status" value="1"/>
</dbReference>
<keyword id="KW-0004">4Fe-4S</keyword>
<keyword id="KW-0408">Iron</keyword>
<keyword id="KW-0411">Iron-sulfur</keyword>
<keyword id="KW-0479">Metal-binding</keyword>
<keyword id="KW-0489">Methyltransferase</keyword>
<keyword id="KW-1185">Reference proteome</keyword>
<keyword id="KW-0949">S-adenosyl-L-methionine</keyword>
<keyword id="KW-0808">Transferase</keyword>
<protein>
    <recommendedName>
        <fullName>Uncharacterized RNA methyltransferase pc1544</fullName>
        <ecNumber>2.1.1.-</ecNumber>
    </recommendedName>
</protein>
<feature type="chain" id="PRO_0000162007" description="Uncharacterized RNA methyltransferase pc1544">
    <location>
        <begin position="1"/>
        <end position="442"/>
    </location>
</feature>
<feature type="active site" description="Nucleophile" evidence="2">
    <location>
        <position position="399"/>
    </location>
</feature>
<feature type="binding site" evidence="1">
    <location>
        <position position="43"/>
    </location>
    <ligand>
        <name>[4Fe-4S] cluster</name>
        <dbReference type="ChEBI" id="CHEBI:49883"/>
    </ligand>
</feature>
<feature type="binding site" evidence="1">
    <location>
        <position position="49"/>
    </location>
    <ligand>
        <name>[4Fe-4S] cluster</name>
        <dbReference type="ChEBI" id="CHEBI:49883"/>
    </ligand>
</feature>
<feature type="binding site" evidence="1">
    <location>
        <position position="52"/>
    </location>
    <ligand>
        <name>[4Fe-4S] cluster</name>
        <dbReference type="ChEBI" id="CHEBI:49883"/>
    </ligand>
</feature>
<feature type="binding site" evidence="1">
    <location>
        <position position="130"/>
    </location>
    <ligand>
        <name>[4Fe-4S] cluster</name>
        <dbReference type="ChEBI" id="CHEBI:49883"/>
    </ligand>
</feature>
<feature type="binding site" evidence="2">
    <location>
        <position position="273"/>
    </location>
    <ligand>
        <name>S-adenosyl-L-methionine</name>
        <dbReference type="ChEBI" id="CHEBI:59789"/>
    </ligand>
</feature>
<feature type="binding site" evidence="2">
    <location>
        <position position="302"/>
    </location>
    <ligand>
        <name>S-adenosyl-L-methionine</name>
        <dbReference type="ChEBI" id="CHEBI:59789"/>
    </ligand>
</feature>
<feature type="binding site" evidence="2">
    <location>
        <position position="323"/>
    </location>
    <ligand>
        <name>S-adenosyl-L-methionine</name>
        <dbReference type="ChEBI" id="CHEBI:59789"/>
    </ligand>
</feature>
<feature type="binding site" evidence="2">
    <location>
        <position position="372"/>
    </location>
    <ligand>
        <name>S-adenosyl-L-methionine</name>
        <dbReference type="ChEBI" id="CHEBI:59789"/>
    </ligand>
</feature>
<name>Y1544_PARUW</name>
<evidence type="ECO:0000250" key="1"/>
<evidence type="ECO:0000255" key="2">
    <source>
        <dbReference type="PROSITE-ProRule" id="PRU01024"/>
    </source>
</evidence>